<proteinExistence type="inferred from homology"/>
<protein>
    <recommendedName>
        <fullName evidence="1">Large ribosomal subunit protein bL27</fullName>
    </recommendedName>
    <alternativeName>
        <fullName evidence="3">50S ribosomal protein L27</fullName>
    </alternativeName>
</protein>
<keyword id="KW-0687">Ribonucleoprotein</keyword>
<keyword id="KW-0689">Ribosomal protein</keyword>
<organism>
    <name type="scientific">Chlamydia muridarum (strain MoPn / Nigg)</name>
    <dbReference type="NCBI Taxonomy" id="243161"/>
    <lineage>
        <taxon>Bacteria</taxon>
        <taxon>Pseudomonadati</taxon>
        <taxon>Chlamydiota</taxon>
        <taxon>Chlamydiia</taxon>
        <taxon>Chlamydiales</taxon>
        <taxon>Chlamydiaceae</taxon>
        <taxon>Chlamydia/Chlamydophila group</taxon>
        <taxon>Chlamydia</taxon>
    </lineage>
</organism>
<accession>P66124</accession>
<accession>O84424</accession>
<accession>Q9PJX6</accession>
<dbReference type="EMBL" id="AE002160">
    <property type="protein sequence ID" value="AAF39514.1"/>
    <property type="molecule type" value="Genomic_DNA"/>
</dbReference>
<dbReference type="PIR" id="E81673">
    <property type="entry name" value="E81673"/>
</dbReference>
<dbReference type="RefSeq" id="WP_009871771.1">
    <property type="nucleotide sequence ID" value="NZ_CP063055.1"/>
</dbReference>
<dbReference type="SMR" id="P66124"/>
<dbReference type="GeneID" id="93065248"/>
<dbReference type="KEGG" id="cmu:TC_0700"/>
<dbReference type="eggNOG" id="COG0211">
    <property type="taxonomic scope" value="Bacteria"/>
</dbReference>
<dbReference type="HOGENOM" id="CLU_095424_4_0_0"/>
<dbReference type="OrthoDB" id="9803474at2"/>
<dbReference type="Proteomes" id="UP000000800">
    <property type="component" value="Chromosome"/>
</dbReference>
<dbReference type="GO" id="GO:0022625">
    <property type="term" value="C:cytosolic large ribosomal subunit"/>
    <property type="evidence" value="ECO:0007669"/>
    <property type="project" value="TreeGrafter"/>
</dbReference>
<dbReference type="GO" id="GO:0003735">
    <property type="term" value="F:structural constituent of ribosome"/>
    <property type="evidence" value="ECO:0007669"/>
    <property type="project" value="InterPro"/>
</dbReference>
<dbReference type="GO" id="GO:0006412">
    <property type="term" value="P:translation"/>
    <property type="evidence" value="ECO:0007669"/>
    <property type="project" value="UniProtKB-UniRule"/>
</dbReference>
<dbReference type="FunFam" id="2.40.50.100:FF:000020">
    <property type="entry name" value="50S ribosomal protein L27"/>
    <property type="match status" value="1"/>
</dbReference>
<dbReference type="Gene3D" id="2.40.50.100">
    <property type="match status" value="1"/>
</dbReference>
<dbReference type="HAMAP" id="MF_00539">
    <property type="entry name" value="Ribosomal_bL27"/>
    <property type="match status" value="1"/>
</dbReference>
<dbReference type="InterPro" id="IPR001684">
    <property type="entry name" value="Ribosomal_bL27"/>
</dbReference>
<dbReference type="NCBIfam" id="TIGR00062">
    <property type="entry name" value="L27"/>
    <property type="match status" value="1"/>
</dbReference>
<dbReference type="PANTHER" id="PTHR15893:SF0">
    <property type="entry name" value="LARGE RIBOSOMAL SUBUNIT PROTEIN BL27M"/>
    <property type="match status" value="1"/>
</dbReference>
<dbReference type="PANTHER" id="PTHR15893">
    <property type="entry name" value="RIBOSOMAL PROTEIN L27"/>
    <property type="match status" value="1"/>
</dbReference>
<dbReference type="Pfam" id="PF01016">
    <property type="entry name" value="Ribosomal_L27"/>
    <property type="match status" value="1"/>
</dbReference>
<dbReference type="PRINTS" id="PR00063">
    <property type="entry name" value="RIBOSOMALL27"/>
</dbReference>
<dbReference type="SUPFAM" id="SSF110324">
    <property type="entry name" value="Ribosomal L27 protein-like"/>
    <property type="match status" value="1"/>
</dbReference>
<evidence type="ECO:0000255" key="1">
    <source>
        <dbReference type="HAMAP-Rule" id="MF_00539"/>
    </source>
</evidence>
<evidence type="ECO:0000256" key="2">
    <source>
        <dbReference type="SAM" id="MobiDB-lite"/>
    </source>
</evidence>
<evidence type="ECO:0000305" key="3"/>
<sequence length="83" mass="8944">MAHKKGQGASRNGRDSESKRLGLKVGAGQRVSTGSILVRQRGTKWHPAVNVGRGKDDTLFALVDGIVVMKKTDRTYVSVIPQA</sequence>
<feature type="chain" id="PRO_0000181072" description="Large ribosomal subunit protein bL27">
    <location>
        <begin position="1"/>
        <end position="83"/>
    </location>
</feature>
<feature type="region of interest" description="Disordered" evidence="2">
    <location>
        <begin position="1"/>
        <end position="25"/>
    </location>
</feature>
<gene>
    <name evidence="1" type="primary">rpmA</name>
    <name type="synonym">rl27</name>
    <name type="ordered locus">TC_0700</name>
</gene>
<comment type="similarity">
    <text evidence="1">Belongs to the bacterial ribosomal protein bL27 family.</text>
</comment>
<reference key="1">
    <citation type="journal article" date="2000" name="Nucleic Acids Res.">
        <title>Genome sequences of Chlamydia trachomatis MoPn and Chlamydia pneumoniae AR39.</title>
        <authorList>
            <person name="Read T.D."/>
            <person name="Brunham R.C."/>
            <person name="Shen C."/>
            <person name="Gill S.R."/>
            <person name="Heidelberg J.F."/>
            <person name="White O."/>
            <person name="Hickey E.K."/>
            <person name="Peterson J.D."/>
            <person name="Utterback T.R."/>
            <person name="Berry K.J."/>
            <person name="Bass S."/>
            <person name="Linher K.D."/>
            <person name="Weidman J.F."/>
            <person name="Khouri H.M."/>
            <person name="Craven B."/>
            <person name="Bowman C."/>
            <person name="Dodson R.J."/>
            <person name="Gwinn M.L."/>
            <person name="Nelson W.C."/>
            <person name="DeBoy R.T."/>
            <person name="Kolonay J.F."/>
            <person name="McClarty G."/>
            <person name="Salzberg S.L."/>
            <person name="Eisen J.A."/>
            <person name="Fraser C.M."/>
        </authorList>
    </citation>
    <scope>NUCLEOTIDE SEQUENCE [LARGE SCALE GENOMIC DNA]</scope>
    <source>
        <strain>MoPn / Nigg</strain>
    </source>
</reference>
<name>RL27_CHLMU</name>